<protein>
    <recommendedName>
        <fullName evidence="1">Holliday junction branch migration complex subunit RuvA</fullName>
    </recommendedName>
</protein>
<dbReference type="EMBL" id="CP001138">
    <property type="protein sequence ID" value="ACH49081.1"/>
    <property type="molecule type" value="Genomic_DNA"/>
</dbReference>
<dbReference type="RefSeq" id="WP_000580335.1">
    <property type="nucleotide sequence ID" value="NC_011149.1"/>
</dbReference>
<dbReference type="SMR" id="B5F3J6"/>
<dbReference type="KEGG" id="sea:SeAg_B1229"/>
<dbReference type="HOGENOM" id="CLU_087936_0_0_6"/>
<dbReference type="Proteomes" id="UP000008819">
    <property type="component" value="Chromosome"/>
</dbReference>
<dbReference type="GO" id="GO:0005737">
    <property type="term" value="C:cytoplasm"/>
    <property type="evidence" value="ECO:0007669"/>
    <property type="project" value="UniProtKB-SubCell"/>
</dbReference>
<dbReference type="GO" id="GO:0009379">
    <property type="term" value="C:Holliday junction helicase complex"/>
    <property type="evidence" value="ECO:0007669"/>
    <property type="project" value="InterPro"/>
</dbReference>
<dbReference type="GO" id="GO:0048476">
    <property type="term" value="C:Holliday junction resolvase complex"/>
    <property type="evidence" value="ECO:0007669"/>
    <property type="project" value="UniProtKB-UniRule"/>
</dbReference>
<dbReference type="GO" id="GO:0005524">
    <property type="term" value="F:ATP binding"/>
    <property type="evidence" value="ECO:0007669"/>
    <property type="project" value="InterPro"/>
</dbReference>
<dbReference type="GO" id="GO:0000400">
    <property type="term" value="F:four-way junction DNA binding"/>
    <property type="evidence" value="ECO:0007669"/>
    <property type="project" value="UniProtKB-UniRule"/>
</dbReference>
<dbReference type="GO" id="GO:0009378">
    <property type="term" value="F:four-way junction helicase activity"/>
    <property type="evidence" value="ECO:0007669"/>
    <property type="project" value="InterPro"/>
</dbReference>
<dbReference type="GO" id="GO:0006310">
    <property type="term" value="P:DNA recombination"/>
    <property type="evidence" value="ECO:0007669"/>
    <property type="project" value="UniProtKB-UniRule"/>
</dbReference>
<dbReference type="GO" id="GO:0006281">
    <property type="term" value="P:DNA repair"/>
    <property type="evidence" value="ECO:0007669"/>
    <property type="project" value="UniProtKB-UniRule"/>
</dbReference>
<dbReference type="CDD" id="cd14332">
    <property type="entry name" value="UBA_RuvA_C"/>
    <property type="match status" value="1"/>
</dbReference>
<dbReference type="FunFam" id="1.10.150.20:FF:000012">
    <property type="entry name" value="Holliday junction ATP-dependent DNA helicase RuvA"/>
    <property type="match status" value="1"/>
</dbReference>
<dbReference type="FunFam" id="1.10.8.10:FF:000008">
    <property type="entry name" value="Holliday junction ATP-dependent DNA helicase RuvA"/>
    <property type="match status" value="1"/>
</dbReference>
<dbReference type="FunFam" id="2.40.50.140:FF:000083">
    <property type="entry name" value="Holliday junction ATP-dependent DNA helicase RuvA"/>
    <property type="match status" value="1"/>
</dbReference>
<dbReference type="Gene3D" id="1.10.150.20">
    <property type="entry name" value="5' to 3' exonuclease, C-terminal subdomain"/>
    <property type="match status" value="1"/>
</dbReference>
<dbReference type="Gene3D" id="1.10.8.10">
    <property type="entry name" value="DNA helicase RuvA subunit, C-terminal domain"/>
    <property type="match status" value="1"/>
</dbReference>
<dbReference type="Gene3D" id="2.40.50.140">
    <property type="entry name" value="Nucleic acid-binding proteins"/>
    <property type="match status" value="1"/>
</dbReference>
<dbReference type="HAMAP" id="MF_00031">
    <property type="entry name" value="DNA_HJ_migration_RuvA"/>
    <property type="match status" value="1"/>
</dbReference>
<dbReference type="InterPro" id="IPR013849">
    <property type="entry name" value="DNA_helicase_Holl-junc_RuvA_I"/>
</dbReference>
<dbReference type="InterPro" id="IPR003583">
    <property type="entry name" value="Hlx-hairpin-Hlx_DNA-bd_motif"/>
</dbReference>
<dbReference type="InterPro" id="IPR012340">
    <property type="entry name" value="NA-bd_OB-fold"/>
</dbReference>
<dbReference type="InterPro" id="IPR000085">
    <property type="entry name" value="RuvA"/>
</dbReference>
<dbReference type="InterPro" id="IPR010994">
    <property type="entry name" value="RuvA_2-like"/>
</dbReference>
<dbReference type="InterPro" id="IPR011114">
    <property type="entry name" value="RuvA_C"/>
</dbReference>
<dbReference type="InterPro" id="IPR036267">
    <property type="entry name" value="RuvA_C_sf"/>
</dbReference>
<dbReference type="NCBIfam" id="TIGR00084">
    <property type="entry name" value="ruvA"/>
    <property type="match status" value="1"/>
</dbReference>
<dbReference type="Pfam" id="PF14520">
    <property type="entry name" value="HHH_5"/>
    <property type="match status" value="1"/>
</dbReference>
<dbReference type="Pfam" id="PF07499">
    <property type="entry name" value="RuvA_C"/>
    <property type="match status" value="1"/>
</dbReference>
<dbReference type="Pfam" id="PF01330">
    <property type="entry name" value="RuvA_N"/>
    <property type="match status" value="1"/>
</dbReference>
<dbReference type="SMART" id="SM00278">
    <property type="entry name" value="HhH1"/>
    <property type="match status" value="2"/>
</dbReference>
<dbReference type="SUPFAM" id="SSF46929">
    <property type="entry name" value="DNA helicase RuvA subunit, C-terminal domain"/>
    <property type="match status" value="1"/>
</dbReference>
<dbReference type="SUPFAM" id="SSF50249">
    <property type="entry name" value="Nucleic acid-binding proteins"/>
    <property type="match status" value="1"/>
</dbReference>
<dbReference type="SUPFAM" id="SSF47781">
    <property type="entry name" value="RuvA domain 2-like"/>
    <property type="match status" value="1"/>
</dbReference>
<feature type="chain" id="PRO_1000090361" description="Holliday junction branch migration complex subunit RuvA">
    <location>
        <begin position="1"/>
        <end position="203"/>
    </location>
</feature>
<feature type="region of interest" description="Domain I" evidence="1">
    <location>
        <begin position="1"/>
        <end position="64"/>
    </location>
</feature>
<feature type="region of interest" description="Domain II" evidence="1">
    <location>
        <begin position="65"/>
        <end position="142"/>
    </location>
</feature>
<feature type="region of interest" description="Flexible linker" evidence="1">
    <location>
        <begin position="143"/>
        <end position="154"/>
    </location>
</feature>
<feature type="region of interest" description="Domain III" evidence="1">
    <location>
        <begin position="155"/>
        <end position="203"/>
    </location>
</feature>
<accession>B5F3J6</accession>
<sequence>MIGRLRGIILEKQPPIVLLETGGVGYEVHMPMTCFYELPEAGQEAIVFTHFVVREDAQLLYGFNNKQERTLFKELIKTNGVGPKLALAILSGMSAQQFVNAVEREELGALVKLPGIGKKTAERLIVEMKDRFKGLHGDLFTPAVDLVLTSPASPTSEDAEQEAVAALVALGYKPQEASRMVSKIARPDASSETLIRDALRAAL</sequence>
<evidence type="ECO:0000255" key="1">
    <source>
        <dbReference type="HAMAP-Rule" id="MF_00031"/>
    </source>
</evidence>
<organism>
    <name type="scientific">Salmonella agona (strain SL483)</name>
    <dbReference type="NCBI Taxonomy" id="454166"/>
    <lineage>
        <taxon>Bacteria</taxon>
        <taxon>Pseudomonadati</taxon>
        <taxon>Pseudomonadota</taxon>
        <taxon>Gammaproteobacteria</taxon>
        <taxon>Enterobacterales</taxon>
        <taxon>Enterobacteriaceae</taxon>
        <taxon>Salmonella</taxon>
    </lineage>
</organism>
<comment type="function">
    <text evidence="1">The RuvA-RuvB-RuvC complex processes Holliday junction (HJ) DNA during genetic recombination and DNA repair, while the RuvA-RuvB complex plays an important role in the rescue of blocked DNA replication forks via replication fork reversal (RFR). RuvA specifically binds to HJ cruciform DNA, conferring on it an open structure. The RuvB hexamer acts as an ATP-dependent pump, pulling dsDNA into and through the RuvAB complex. HJ branch migration allows RuvC to scan DNA until it finds its consensus sequence, where it cleaves and resolves the cruciform DNA.</text>
</comment>
<comment type="subunit">
    <text evidence="1">Homotetramer. Forms an RuvA(8)-RuvB(12)-Holliday junction (HJ) complex. HJ DNA is sandwiched between 2 RuvA tetramers; dsDNA enters through RuvA and exits via RuvB. An RuvB hexamer assembles on each DNA strand where it exits the tetramer. Each RuvB hexamer is contacted by two RuvA subunits (via domain III) on 2 adjacent RuvB subunits; this complex drives branch migration. In the full resolvosome a probable DNA-RuvA(4)-RuvB(12)-RuvC(2) complex forms which resolves the HJ.</text>
</comment>
<comment type="subcellular location">
    <subcellularLocation>
        <location evidence="1">Cytoplasm</location>
    </subcellularLocation>
</comment>
<comment type="domain">
    <text evidence="1">Has three domains with a flexible linker between the domains II and III and assumes an 'L' shape. Domain III is highly mobile and contacts RuvB.</text>
</comment>
<comment type="similarity">
    <text evidence="1">Belongs to the RuvA family.</text>
</comment>
<proteinExistence type="inferred from homology"/>
<keyword id="KW-0963">Cytoplasm</keyword>
<keyword id="KW-0227">DNA damage</keyword>
<keyword id="KW-0233">DNA recombination</keyword>
<keyword id="KW-0234">DNA repair</keyword>
<keyword id="KW-0238">DNA-binding</keyword>
<name>RUVA_SALA4</name>
<gene>
    <name evidence="1" type="primary">ruvA</name>
    <name type="ordered locus">SeAg_B1229</name>
</gene>
<reference key="1">
    <citation type="journal article" date="2011" name="J. Bacteriol.">
        <title>Comparative genomics of 28 Salmonella enterica isolates: evidence for CRISPR-mediated adaptive sublineage evolution.</title>
        <authorList>
            <person name="Fricke W.F."/>
            <person name="Mammel M.K."/>
            <person name="McDermott P.F."/>
            <person name="Tartera C."/>
            <person name="White D.G."/>
            <person name="Leclerc J.E."/>
            <person name="Ravel J."/>
            <person name="Cebula T.A."/>
        </authorList>
    </citation>
    <scope>NUCLEOTIDE SEQUENCE [LARGE SCALE GENOMIC DNA]</scope>
    <source>
        <strain>SL483</strain>
    </source>
</reference>